<gene>
    <name evidence="1" type="primary">rpsH</name>
    <name type="ordered locus">BCAN_A1242</name>
</gene>
<protein>
    <recommendedName>
        <fullName evidence="1">Small ribosomal subunit protein uS8</fullName>
    </recommendedName>
    <alternativeName>
        <fullName evidence="2">30S ribosomal protein S8</fullName>
    </alternativeName>
</protein>
<evidence type="ECO:0000255" key="1">
    <source>
        <dbReference type="HAMAP-Rule" id="MF_01302"/>
    </source>
</evidence>
<evidence type="ECO:0000305" key="2"/>
<feature type="chain" id="PRO_1000085911" description="Small ribosomal subunit protein uS8">
    <location>
        <begin position="1"/>
        <end position="132"/>
    </location>
</feature>
<organism>
    <name type="scientific">Brucella canis (strain ATCC 23365 / NCTC 10854 / RM-666)</name>
    <dbReference type="NCBI Taxonomy" id="483179"/>
    <lineage>
        <taxon>Bacteria</taxon>
        <taxon>Pseudomonadati</taxon>
        <taxon>Pseudomonadota</taxon>
        <taxon>Alphaproteobacteria</taxon>
        <taxon>Hyphomicrobiales</taxon>
        <taxon>Brucellaceae</taxon>
        <taxon>Brucella/Ochrobactrum group</taxon>
        <taxon>Brucella</taxon>
    </lineage>
</organism>
<reference key="1">
    <citation type="submission" date="2007-10" db="EMBL/GenBank/DDBJ databases">
        <title>Brucella canis ATCC 23365 whole genome shotgun sequencing project.</title>
        <authorList>
            <person name="Setubal J.C."/>
            <person name="Bowns C."/>
            <person name="Boyle S."/>
            <person name="Crasta O.R."/>
            <person name="Czar M.J."/>
            <person name="Dharmanolla C."/>
            <person name="Gillespie J.J."/>
            <person name="Kenyon R.W."/>
            <person name="Lu J."/>
            <person name="Mane S."/>
            <person name="Mohapatra S."/>
            <person name="Nagrani S."/>
            <person name="Purkayastha A."/>
            <person name="Rajasimha H.K."/>
            <person name="Shallom J.M."/>
            <person name="Shallom S."/>
            <person name="Shukla M."/>
            <person name="Snyder E.E."/>
            <person name="Sobral B.W."/>
            <person name="Wattam A.R."/>
            <person name="Will R."/>
            <person name="Williams K."/>
            <person name="Yoo H."/>
            <person name="Bruce D."/>
            <person name="Detter C."/>
            <person name="Munk C."/>
            <person name="Brettin T.S."/>
        </authorList>
    </citation>
    <scope>NUCLEOTIDE SEQUENCE [LARGE SCALE GENOMIC DNA]</scope>
    <source>
        <strain>ATCC 23365 / NCTC 10854 / RM-666</strain>
    </source>
</reference>
<proteinExistence type="inferred from homology"/>
<sequence length="132" mass="14604">MSVSDPLGDMLTRIRNAVGRKKTKVSTPASKLRARVLDVLQAEGYIRGYTQSEFENGKAEIEIELKYYEGVPVIREITRVSKPGRRVYVSVKSIPQVANGLGISILSTPKGVMADHEAREQNVGGELLCRIF</sequence>
<name>RS8_BRUC2</name>
<comment type="function">
    <text evidence="1">One of the primary rRNA binding proteins, it binds directly to 16S rRNA central domain where it helps coordinate assembly of the platform of the 30S subunit.</text>
</comment>
<comment type="subunit">
    <text evidence="1">Part of the 30S ribosomal subunit. Contacts proteins S5 and S12.</text>
</comment>
<comment type="similarity">
    <text evidence="1">Belongs to the universal ribosomal protein uS8 family.</text>
</comment>
<accession>A9M5N6</accession>
<dbReference type="EMBL" id="CP000872">
    <property type="protein sequence ID" value="ABX62291.1"/>
    <property type="molecule type" value="Genomic_DNA"/>
</dbReference>
<dbReference type="RefSeq" id="WP_004683921.1">
    <property type="nucleotide sequence ID" value="NC_010103.1"/>
</dbReference>
<dbReference type="SMR" id="A9M5N6"/>
<dbReference type="GeneID" id="97533538"/>
<dbReference type="KEGG" id="bcs:BCAN_A1242"/>
<dbReference type="HOGENOM" id="CLU_098428_0_0_5"/>
<dbReference type="Proteomes" id="UP000001385">
    <property type="component" value="Chromosome I"/>
</dbReference>
<dbReference type="GO" id="GO:1990904">
    <property type="term" value="C:ribonucleoprotein complex"/>
    <property type="evidence" value="ECO:0007669"/>
    <property type="project" value="UniProtKB-KW"/>
</dbReference>
<dbReference type="GO" id="GO:0005840">
    <property type="term" value="C:ribosome"/>
    <property type="evidence" value="ECO:0007669"/>
    <property type="project" value="UniProtKB-KW"/>
</dbReference>
<dbReference type="GO" id="GO:0019843">
    <property type="term" value="F:rRNA binding"/>
    <property type="evidence" value="ECO:0007669"/>
    <property type="project" value="UniProtKB-UniRule"/>
</dbReference>
<dbReference type="GO" id="GO:0003735">
    <property type="term" value="F:structural constituent of ribosome"/>
    <property type="evidence" value="ECO:0007669"/>
    <property type="project" value="InterPro"/>
</dbReference>
<dbReference type="GO" id="GO:0006412">
    <property type="term" value="P:translation"/>
    <property type="evidence" value="ECO:0007669"/>
    <property type="project" value="UniProtKB-UniRule"/>
</dbReference>
<dbReference type="FunFam" id="3.30.1370.30:FF:000002">
    <property type="entry name" value="30S ribosomal protein S8"/>
    <property type="match status" value="1"/>
</dbReference>
<dbReference type="FunFam" id="3.30.1490.10:FF:000001">
    <property type="entry name" value="30S ribosomal protein S8"/>
    <property type="match status" value="1"/>
</dbReference>
<dbReference type="Gene3D" id="3.30.1370.30">
    <property type="match status" value="1"/>
</dbReference>
<dbReference type="Gene3D" id="3.30.1490.10">
    <property type="match status" value="1"/>
</dbReference>
<dbReference type="HAMAP" id="MF_01302_B">
    <property type="entry name" value="Ribosomal_uS8_B"/>
    <property type="match status" value="1"/>
</dbReference>
<dbReference type="InterPro" id="IPR000630">
    <property type="entry name" value="Ribosomal_uS8"/>
</dbReference>
<dbReference type="InterPro" id="IPR047863">
    <property type="entry name" value="Ribosomal_uS8_CS"/>
</dbReference>
<dbReference type="InterPro" id="IPR035987">
    <property type="entry name" value="Ribosomal_uS8_sf"/>
</dbReference>
<dbReference type="NCBIfam" id="NF001109">
    <property type="entry name" value="PRK00136.1"/>
    <property type="match status" value="1"/>
</dbReference>
<dbReference type="PANTHER" id="PTHR11758">
    <property type="entry name" value="40S RIBOSOMAL PROTEIN S15A"/>
    <property type="match status" value="1"/>
</dbReference>
<dbReference type="Pfam" id="PF00410">
    <property type="entry name" value="Ribosomal_S8"/>
    <property type="match status" value="1"/>
</dbReference>
<dbReference type="SUPFAM" id="SSF56047">
    <property type="entry name" value="Ribosomal protein S8"/>
    <property type="match status" value="1"/>
</dbReference>
<dbReference type="PROSITE" id="PS00053">
    <property type="entry name" value="RIBOSOMAL_S8"/>
    <property type="match status" value="1"/>
</dbReference>
<keyword id="KW-1185">Reference proteome</keyword>
<keyword id="KW-0687">Ribonucleoprotein</keyword>
<keyword id="KW-0689">Ribosomal protein</keyword>
<keyword id="KW-0694">RNA-binding</keyword>
<keyword id="KW-0699">rRNA-binding</keyword>